<reference key="1">
    <citation type="submission" date="1998-02" db="EMBL/GenBank/DDBJ databases">
        <title>Molecular cloning of rat Smad5 gene.</title>
        <authorList>
            <person name="Miyakita A."/>
            <person name="Okuno S."/>
            <person name="Watanabe T.K."/>
            <person name="Oga K."/>
            <person name="Tsuji A."/>
            <person name="Hishigaki H."/>
            <person name="Suto T."/>
            <person name="Nakagawa K."/>
            <person name="Nakahara Y."/>
            <person name="Higashi K."/>
        </authorList>
    </citation>
    <scope>NUCLEOTIDE SEQUENCE [MRNA]</scope>
    <source>
        <tissue>Testis</tissue>
    </source>
</reference>
<reference key="2">
    <citation type="journal article" date="2001" name="Biochem. Biophys. Res. Commun.">
        <title>Characterization of the DNA-binding property of Smad5.</title>
        <authorList>
            <person name="Li W."/>
            <person name="Chen F."/>
            <person name="Nagarajan R.P."/>
            <person name="Liu X."/>
            <person name="Chen Y."/>
        </authorList>
    </citation>
    <scope>FUNCTION</scope>
    <scope>DNA-BINDING</scope>
</reference>
<reference key="3">
    <citation type="journal article" date="2012" name="Nat. Commun.">
        <title>Quantitative maps of protein phosphorylation sites across 14 different rat organs and tissues.</title>
        <authorList>
            <person name="Lundby A."/>
            <person name="Secher A."/>
            <person name="Lage K."/>
            <person name="Nordsborg N.B."/>
            <person name="Dmytriyev A."/>
            <person name="Lundby C."/>
            <person name="Olsen J.V."/>
        </authorList>
    </citation>
    <scope>PHOSPHORYLATION [LARGE SCALE ANALYSIS] AT SER-465</scope>
    <scope>IDENTIFICATION BY MASS SPECTROMETRY [LARGE SCALE ANALYSIS]</scope>
</reference>
<gene>
    <name type="primary">Smad5</name>
    <name type="synonym">Madh5</name>
</gene>
<keyword id="KW-0007">Acetylation</keyword>
<keyword id="KW-0963">Cytoplasm</keyword>
<keyword id="KW-0238">DNA-binding</keyword>
<keyword id="KW-0479">Metal-binding</keyword>
<keyword id="KW-0496">Mitochondrion</keyword>
<keyword id="KW-0539">Nucleus</keyword>
<keyword id="KW-0597">Phosphoprotein</keyword>
<keyword id="KW-1185">Reference proteome</keyword>
<keyword id="KW-0804">Transcription</keyword>
<keyword id="KW-0805">Transcription regulation</keyword>
<keyword id="KW-0862">Zinc</keyword>
<protein>
    <recommendedName>
        <fullName>Mothers against decapentaplegic homolog 5</fullName>
        <shortName>MAD homolog 5</shortName>
        <shortName>Mothers against DPP homolog 5</shortName>
    </recommendedName>
    <alternativeName>
        <fullName>SMAD family member 5</fullName>
        <shortName>SMAD 5</shortName>
        <shortName>Smad5</shortName>
    </alternativeName>
</protein>
<organism>
    <name type="scientific">Rattus norvegicus</name>
    <name type="common">Rat</name>
    <dbReference type="NCBI Taxonomy" id="10116"/>
    <lineage>
        <taxon>Eukaryota</taxon>
        <taxon>Metazoa</taxon>
        <taxon>Chordata</taxon>
        <taxon>Craniata</taxon>
        <taxon>Vertebrata</taxon>
        <taxon>Euteleostomi</taxon>
        <taxon>Mammalia</taxon>
        <taxon>Eutheria</taxon>
        <taxon>Euarchontoglires</taxon>
        <taxon>Glires</taxon>
        <taxon>Rodentia</taxon>
        <taxon>Myomorpha</taxon>
        <taxon>Muroidea</taxon>
        <taxon>Muridae</taxon>
        <taxon>Murinae</taxon>
        <taxon>Rattus</taxon>
    </lineage>
</organism>
<dbReference type="EMBL" id="AB010955">
    <property type="protein sequence ID" value="BAA83093.1"/>
    <property type="molecule type" value="mRNA"/>
</dbReference>
<dbReference type="RefSeq" id="NP_067724.1">
    <property type="nucleotide sequence ID" value="NM_021692.1"/>
</dbReference>
<dbReference type="RefSeq" id="XP_006253648.1">
    <property type="nucleotide sequence ID" value="XM_006253586.5"/>
</dbReference>
<dbReference type="RefSeq" id="XP_006253649.1">
    <property type="nucleotide sequence ID" value="XM_006253587.5"/>
</dbReference>
<dbReference type="RefSeq" id="XP_006253650.1">
    <property type="nucleotide sequence ID" value="XM_006253588.5"/>
</dbReference>
<dbReference type="RefSeq" id="XP_008769669.1">
    <property type="nucleotide sequence ID" value="XM_008771447.2"/>
</dbReference>
<dbReference type="RefSeq" id="XP_008769670.1">
    <property type="nucleotide sequence ID" value="XM_008771448.2"/>
</dbReference>
<dbReference type="RefSeq" id="XP_017456146.1">
    <property type="nucleotide sequence ID" value="XM_017600657.1"/>
</dbReference>
<dbReference type="RefSeq" id="XP_017456147.1">
    <property type="nucleotide sequence ID" value="XM_017600658.3"/>
</dbReference>
<dbReference type="RefSeq" id="XP_017456148.1">
    <property type="nucleotide sequence ID" value="XM_017600659.1"/>
</dbReference>
<dbReference type="RefSeq" id="XP_038951963.1">
    <property type="nucleotide sequence ID" value="XM_039096035.2"/>
</dbReference>
<dbReference type="RefSeq" id="XP_038951964.1">
    <property type="nucleotide sequence ID" value="XM_039096036.2"/>
</dbReference>
<dbReference type="RefSeq" id="XP_063132787.1">
    <property type="nucleotide sequence ID" value="XM_063276717.1"/>
</dbReference>
<dbReference type="SMR" id="Q9R1V3"/>
<dbReference type="FunCoup" id="Q9R1V3">
    <property type="interactions" value="4352"/>
</dbReference>
<dbReference type="STRING" id="10116.ENSRNOP00000016704"/>
<dbReference type="iPTMnet" id="Q9R1V3"/>
<dbReference type="PhosphoSitePlus" id="Q9R1V3"/>
<dbReference type="jPOST" id="Q9R1V3"/>
<dbReference type="PaxDb" id="10116-ENSRNOP00000016704"/>
<dbReference type="Ensembl" id="ENSRNOT00000016704.5">
    <property type="protein sequence ID" value="ENSRNOP00000016704.3"/>
    <property type="gene ID" value="ENSRNOG00000022870.4"/>
</dbReference>
<dbReference type="GeneID" id="59328"/>
<dbReference type="KEGG" id="rno:59328"/>
<dbReference type="UCSC" id="RGD:620158">
    <property type="organism name" value="rat"/>
</dbReference>
<dbReference type="AGR" id="RGD:620158"/>
<dbReference type="CTD" id="4090"/>
<dbReference type="RGD" id="620158">
    <property type="gene designation" value="Smad5"/>
</dbReference>
<dbReference type="eggNOG" id="KOG3701">
    <property type="taxonomic scope" value="Eukaryota"/>
</dbReference>
<dbReference type="GeneTree" id="ENSGT00940000155437"/>
<dbReference type="HOGENOM" id="CLU_026736_0_2_1"/>
<dbReference type="InParanoid" id="Q9R1V3"/>
<dbReference type="OMA" id="QPMDTGN"/>
<dbReference type="OrthoDB" id="5794312at2759"/>
<dbReference type="PhylomeDB" id="Q9R1V3"/>
<dbReference type="TreeFam" id="TF314923"/>
<dbReference type="Reactome" id="R-RNO-201451">
    <property type="pathway name" value="Signaling by BMP"/>
</dbReference>
<dbReference type="PRO" id="PR:Q9R1V3"/>
<dbReference type="Proteomes" id="UP000002494">
    <property type="component" value="Chromosome 17"/>
</dbReference>
<dbReference type="Bgee" id="ENSRNOG00000022870">
    <property type="expression patterns" value="Expressed in lung and 19 other cell types or tissues"/>
</dbReference>
<dbReference type="ExpressionAtlas" id="Q9R1V3">
    <property type="expression patterns" value="baseline and differential"/>
</dbReference>
<dbReference type="GO" id="GO:0005737">
    <property type="term" value="C:cytoplasm"/>
    <property type="evidence" value="ECO:0000266"/>
    <property type="project" value="RGD"/>
</dbReference>
<dbReference type="GO" id="GO:0005829">
    <property type="term" value="C:cytosol"/>
    <property type="evidence" value="ECO:0007669"/>
    <property type="project" value="Ensembl"/>
</dbReference>
<dbReference type="GO" id="GO:0071144">
    <property type="term" value="C:heteromeric SMAD protein complex"/>
    <property type="evidence" value="ECO:0000318"/>
    <property type="project" value="GO_Central"/>
</dbReference>
<dbReference type="GO" id="GO:0005739">
    <property type="term" value="C:mitochondrion"/>
    <property type="evidence" value="ECO:0007669"/>
    <property type="project" value="UniProtKB-SubCell"/>
</dbReference>
<dbReference type="GO" id="GO:0005654">
    <property type="term" value="C:nucleoplasm"/>
    <property type="evidence" value="ECO:0007669"/>
    <property type="project" value="Ensembl"/>
</dbReference>
<dbReference type="GO" id="GO:0005634">
    <property type="term" value="C:nucleus"/>
    <property type="evidence" value="ECO:0000266"/>
    <property type="project" value="RGD"/>
</dbReference>
<dbReference type="GO" id="GO:0032991">
    <property type="term" value="C:protein-containing complex"/>
    <property type="evidence" value="ECO:0000266"/>
    <property type="project" value="RGD"/>
</dbReference>
<dbReference type="GO" id="GO:0017151">
    <property type="term" value="F:DEAD/H-box RNA helicase binding"/>
    <property type="evidence" value="ECO:0000266"/>
    <property type="project" value="RGD"/>
</dbReference>
<dbReference type="GO" id="GO:0000981">
    <property type="term" value="F:DNA-binding transcription factor activity, RNA polymerase II-specific"/>
    <property type="evidence" value="ECO:0000318"/>
    <property type="project" value="GO_Central"/>
</dbReference>
<dbReference type="GO" id="GO:0001227">
    <property type="term" value="F:DNA-binding transcription repressor activity, RNA polymerase II-specific"/>
    <property type="evidence" value="ECO:0000266"/>
    <property type="project" value="RGD"/>
</dbReference>
<dbReference type="GO" id="GO:0070411">
    <property type="term" value="F:I-SMAD binding"/>
    <property type="evidence" value="ECO:0000318"/>
    <property type="project" value="GO_Central"/>
</dbReference>
<dbReference type="GO" id="GO:0046872">
    <property type="term" value="F:metal ion binding"/>
    <property type="evidence" value="ECO:0007669"/>
    <property type="project" value="UniProtKB-KW"/>
</dbReference>
<dbReference type="GO" id="GO:0000978">
    <property type="term" value="F:RNA polymerase II cis-regulatory region sequence-specific DNA binding"/>
    <property type="evidence" value="ECO:0000266"/>
    <property type="project" value="RGD"/>
</dbReference>
<dbReference type="GO" id="GO:0000977">
    <property type="term" value="F:RNA polymerase II transcription regulatory region sequence-specific DNA binding"/>
    <property type="evidence" value="ECO:0000266"/>
    <property type="project" value="RGD"/>
</dbReference>
<dbReference type="GO" id="GO:1990837">
    <property type="term" value="F:sequence-specific double-stranded DNA binding"/>
    <property type="evidence" value="ECO:0000266"/>
    <property type="project" value="RGD"/>
</dbReference>
<dbReference type="GO" id="GO:0031625">
    <property type="term" value="F:ubiquitin protein ligase binding"/>
    <property type="evidence" value="ECO:0000266"/>
    <property type="project" value="RGD"/>
</dbReference>
<dbReference type="GO" id="GO:0009653">
    <property type="term" value="P:anatomical structure morphogenesis"/>
    <property type="evidence" value="ECO:0000318"/>
    <property type="project" value="GO_Central"/>
</dbReference>
<dbReference type="GO" id="GO:0030509">
    <property type="term" value="P:BMP signaling pathway"/>
    <property type="evidence" value="ECO:0000250"/>
    <property type="project" value="UniProtKB"/>
</dbReference>
<dbReference type="GO" id="GO:0060348">
    <property type="term" value="P:bone development"/>
    <property type="evidence" value="ECO:0000266"/>
    <property type="project" value="RGD"/>
</dbReference>
<dbReference type="GO" id="GO:0060048">
    <property type="term" value="P:cardiac muscle contraction"/>
    <property type="evidence" value="ECO:0000266"/>
    <property type="project" value="RGD"/>
</dbReference>
<dbReference type="GO" id="GO:0051216">
    <property type="term" value="P:cartilage development"/>
    <property type="evidence" value="ECO:0000266"/>
    <property type="project" value="RGD"/>
</dbReference>
<dbReference type="GO" id="GO:0030154">
    <property type="term" value="P:cell differentiation"/>
    <property type="evidence" value="ECO:0000266"/>
    <property type="project" value="RGD"/>
</dbReference>
<dbReference type="GO" id="GO:0009880">
    <property type="term" value="P:embryonic pattern specification"/>
    <property type="evidence" value="ECO:0000250"/>
    <property type="project" value="UniProtKB"/>
</dbReference>
<dbReference type="GO" id="GO:0030218">
    <property type="term" value="P:erythrocyte differentiation"/>
    <property type="evidence" value="ECO:0000266"/>
    <property type="project" value="RGD"/>
</dbReference>
<dbReference type="GO" id="GO:0007281">
    <property type="term" value="P:germ cell development"/>
    <property type="evidence" value="ECO:0000266"/>
    <property type="project" value="RGD"/>
</dbReference>
<dbReference type="GO" id="GO:0006879">
    <property type="term" value="P:intracellular iron ion homeostasis"/>
    <property type="evidence" value="ECO:0000266"/>
    <property type="project" value="RGD"/>
</dbReference>
<dbReference type="GO" id="GO:0001880">
    <property type="term" value="P:Mullerian duct regression"/>
    <property type="evidence" value="ECO:0000315"/>
    <property type="project" value="RGD"/>
</dbReference>
<dbReference type="GO" id="GO:0043066">
    <property type="term" value="P:negative regulation of apoptotic process"/>
    <property type="evidence" value="ECO:0000266"/>
    <property type="project" value="RGD"/>
</dbReference>
<dbReference type="GO" id="GO:1902045">
    <property type="term" value="P:negative regulation of Fas signaling pathway"/>
    <property type="evidence" value="ECO:0000266"/>
    <property type="project" value="RGD"/>
</dbReference>
<dbReference type="GO" id="GO:0010629">
    <property type="term" value="P:negative regulation of gene expression"/>
    <property type="evidence" value="ECO:0000266"/>
    <property type="project" value="RGD"/>
</dbReference>
<dbReference type="GO" id="GO:0000122">
    <property type="term" value="P:negative regulation of transcription by RNA polymerase II"/>
    <property type="evidence" value="ECO:0000266"/>
    <property type="project" value="RGD"/>
</dbReference>
<dbReference type="GO" id="GO:0001503">
    <property type="term" value="P:ossification"/>
    <property type="evidence" value="ECO:0000270"/>
    <property type="project" value="RGD"/>
</dbReference>
<dbReference type="GO" id="GO:0001649">
    <property type="term" value="P:osteoblast differentiation"/>
    <property type="evidence" value="ECO:0000266"/>
    <property type="project" value="RGD"/>
</dbReference>
<dbReference type="GO" id="GO:0002051">
    <property type="term" value="P:osteoblast fate commitment"/>
    <property type="evidence" value="ECO:0000266"/>
    <property type="project" value="RGD"/>
</dbReference>
<dbReference type="GO" id="GO:0045669">
    <property type="term" value="P:positive regulation of osteoblast differentiation"/>
    <property type="evidence" value="ECO:0000266"/>
    <property type="project" value="RGD"/>
</dbReference>
<dbReference type="GO" id="GO:0045944">
    <property type="term" value="P:positive regulation of transcription by RNA polymerase II"/>
    <property type="evidence" value="ECO:0000266"/>
    <property type="project" value="RGD"/>
</dbReference>
<dbReference type="GO" id="GO:0030278">
    <property type="term" value="P:regulation of ossification"/>
    <property type="evidence" value="ECO:0000303"/>
    <property type="project" value="RGD"/>
</dbReference>
<dbReference type="GO" id="GO:0006357">
    <property type="term" value="P:regulation of transcription by RNA polymerase II"/>
    <property type="evidence" value="ECO:0000318"/>
    <property type="project" value="GO_Central"/>
</dbReference>
<dbReference type="GO" id="GO:0060395">
    <property type="term" value="P:SMAD protein signal transduction"/>
    <property type="evidence" value="ECO:0000266"/>
    <property type="project" value="RGD"/>
</dbReference>
<dbReference type="GO" id="GO:0048863">
    <property type="term" value="P:stem cell differentiation"/>
    <property type="evidence" value="ECO:0000266"/>
    <property type="project" value="RGD"/>
</dbReference>
<dbReference type="GO" id="GO:0007179">
    <property type="term" value="P:transforming growth factor beta receptor signaling pathway"/>
    <property type="evidence" value="ECO:0000266"/>
    <property type="project" value="RGD"/>
</dbReference>
<dbReference type="GO" id="GO:0001657">
    <property type="term" value="P:ureteric bud development"/>
    <property type="evidence" value="ECO:0000266"/>
    <property type="project" value="RGD"/>
</dbReference>
<dbReference type="CDD" id="cd10490">
    <property type="entry name" value="MH1_SMAD_1_5_9"/>
    <property type="match status" value="1"/>
</dbReference>
<dbReference type="CDD" id="cd10497">
    <property type="entry name" value="MH2_SMAD_1_5_9"/>
    <property type="match status" value="1"/>
</dbReference>
<dbReference type="FunFam" id="2.60.200.10:FF:000001">
    <property type="entry name" value="Mothers against decapentaplegic homolog"/>
    <property type="match status" value="1"/>
</dbReference>
<dbReference type="FunFam" id="3.90.520.10:FF:000001">
    <property type="entry name" value="Mothers against decapentaplegic homolog"/>
    <property type="match status" value="1"/>
</dbReference>
<dbReference type="Gene3D" id="2.60.200.10">
    <property type="match status" value="1"/>
</dbReference>
<dbReference type="Gene3D" id="3.90.520.10">
    <property type="entry name" value="SMAD MH1 domain"/>
    <property type="match status" value="1"/>
</dbReference>
<dbReference type="InterPro" id="IPR013790">
    <property type="entry name" value="Dwarfin"/>
</dbReference>
<dbReference type="InterPro" id="IPR003619">
    <property type="entry name" value="MAD_homology1_Dwarfin-type"/>
</dbReference>
<dbReference type="InterPro" id="IPR013019">
    <property type="entry name" value="MAD_homology_MH1"/>
</dbReference>
<dbReference type="InterPro" id="IPR017855">
    <property type="entry name" value="SMAD-like_dom_sf"/>
</dbReference>
<dbReference type="InterPro" id="IPR001132">
    <property type="entry name" value="SMAD_dom_Dwarfin-type"/>
</dbReference>
<dbReference type="InterPro" id="IPR008984">
    <property type="entry name" value="SMAD_FHA_dom_sf"/>
</dbReference>
<dbReference type="InterPro" id="IPR036578">
    <property type="entry name" value="SMAD_MH1_sf"/>
</dbReference>
<dbReference type="PANTHER" id="PTHR13703:SF36">
    <property type="entry name" value="MOTHERS AGAINST DECAPENTAPLEGIC HOMOLOG 5"/>
    <property type="match status" value="1"/>
</dbReference>
<dbReference type="PANTHER" id="PTHR13703">
    <property type="entry name" value="SMAD"/>
    <property type="match status" value="1"/>
</dbReference>
<dbReference type="Pfam" id="PF03165">
    <property type="entry name" value="MH1"/>
    <property type="match status" value="1"/>
</dbReference>
<dbReference type="Pfam" id="PF03166">
    <property type="entry name" value="MH2"/>
    <property type="match status" value="1"/>
</dbReference>
<dbReference type="SMART" id="SM00523">
    <property type="entry name" value="DWA"/>
    <property type="match status" value="1"/>
</dbReference>
<dbReference type="SMART" id="SM00524">
    <property type="entry name" value="DWB"/>
    <property type="match status" value="1"/>
</dbReference>
<dbReference type="SUPFAM" id="SSF56366">
    <property type="entry name" value="SMAD MH1 domain"/>
    <property type="match status" value="1"/>
</dbReference>
<dbReference type="SUPFAM" id="SSF49879">
    <property type="entry name" value="SMAD/FHA domain"/>
    <property type="match status" value="1"/>
</dbReference>
<dbReference type="PROSITE" id="PS51075">
    <property type="entry name" value="MH1"/>
    <property type="match status" value="1"/>
</dbReference>
<dbReference type="PROSITE" id="PS51076">
    <property type="entry name" value="MH2"/>
    <property type="match status" value="1"/>
</dbReference>
<feature type="initiator methionine" description="Removed" evidence="2">
    <location>
        <position position="1"/>
    </location>
</feature>
<feature type="chain" id="PRO_0000090867" description="Mothers against decapentaplegic homolog 5">
    <location>
        <begin position="2"/>
        <end position="465"/>
    </location>
</feature>
<feature type="domain" description="MH1" evidence="3">
    <location>
        <begin position="13"/>
        <end position="137"/>
    </location>
</feature>
<feature type="domain" description="MH2" evidence="4">
    <location>
        <begin position="271"/>
        <end position="465"/>
    </location>
</feature>
<feature type="region of interest" description="Disordered" evidence="5">
    <location>
        <begin position="163"/>
        <end position="243"/>
    </location>
</feature>
<feature type="compositionally biased region" description="Polar residues" evidence="5">
    <location>
        <begin position="169"/>
        <end position="182"/>
    </location>
</feature>
<feature type="compositionally biased region" description="Pro residues" evidence="5">
    <location>
        <begin position="186"/>
        <end position="197"/>
    </location>
</feature>
<feature type="compositionally biased region" description="Low complexity" evidence="5">
    <location>
        <begin position="198"/>
        <end position="214"/>
    </location>
</feature>
<feature type="compositionally biased region" description="Polar residues" evidence="5">
    <location>
        <begin position="234"/>
        <end position="243"/>
    </location>
</feature>
<feature type="binding site" evidence="1">
    <location>
        <position position="65"/>
    </location>
    <ligand>
        <name>Zn(2+)</name>
        <dbReference type="ChEBI" id="CHEBI:29105"/>
    </ligand>
</feature>
<feature type="binding site" evidence="1">
    <location>
        <position position="110"/>
    </location>
    <ligand>
        <name>Zn(2+)</name>
        <dbReference type="ChEBI" id="CHEBI:29105"/>
    </ligand>
</feature>
<feature type="binding site" evidence="1">
    <location>
        <position position="122"/>
    </location>
    <ligand>
        <name>Zn(2+)</name>
        <dbReference type="ChEBI" id="CHEBI:29105"/>
    </ligand>
</feature>
<feature type="binding site" evidence="1">
    <location>
        <position position="127"/>
    </location>
    <ligand>
        <name>Zn(2+)</name>
        <dbReference type="ChEBI" id="CHEBI:29105"/>
    </ligand>
</feature>
<feature type="modified residue" description="N-acetylthreonine" evidence="2">
    <location>
        <position position="2"/>
    </location>
</feature>
<feature type="modified residue" description="Phosphoserine" evidence="2 4">
    <location>
        <position position="463"/>
    </location>
</feature>
<feature type="modified residue" description="Phosphoserine" evidence="7">
    <location>
        <position position="465"/>
    </location>
</feature>
<proteinExistence type="evidence at protein level"/>
<comment type="function">
    <text evidence="2">Transcriptional regulator that plays a role in various cellular processes including embryonic development, cell differentiation, angiogenesis and tissue homeostasis. Upon BMP ligand binding to their receptors at the cell surface, is phosphorylated by activated type I BMP receptors (BMPRIs) and associates with SMAD4 to form a heteromeric complex which translocates into the nucleus acting as transcription factor. In turn, the hetero-trimeric complex recognizes cis-regulatory elements containing Smad Binding Elements (SBEs) to modulate the outcome of the signaling network. Non-phosphorylated SMAD5 has a cytoplasmic role in energy metabolism regulation by promoting mitochondrial respiration and glycolysis in response to cytoplasmic pH changes. Mechanistically, interacts with hexokinase 1/HK1 and thereby accelerates glycolysis.</text>
</comment>
<comment type="subunit">
    <text evidence="1 2">Homodimer. Forms trimers with the co-SMAD SMAD4 (By similarity). Interacts with PEBP2-alpha subunit and SMURF1. Interacts with SUV39H1 and SUV39H2. Interacts (via MH2 domain) with LEMD3. Interacts with WWP1. Interacts with TMEM119 (By similarity). Interacts with ZNF8. Interacts with RANBP3L. Interacts with HK1. Interacts with HGS; this interaction attenuates BMP signaling (By similarity).</text>
</comment>
<comment type="subcellular location">
    <subcellularLocation>
        <location evidence="2">Cytoplasm</location>
    </subcellularLocation>
    <subcellularLocation>
        <location evidence="2">Nucleus</location>
    </subcellularLocation>
    <subcellularLocation>
        <location evidence="2">Mitochondrion</location>
    </subcellularLocation>
    <text evidence="2">Cytoplasmic in the absence of ligand. Migrates to the nucleus when complexed with SMAD4.</text>
</comment>
<comment type="PTM">
    <text evidence="2">Phosphorylated on serine by BMP (bone morphogenetic proteins) type 1 receptor kinase.</text>
</comment>
<comment type="PTM">
    <text evidence="2">Ubiquitin-mediated proteolysis by SMAD-specific E3 ubiquitin ligase SMURF1.</text>
</comment>
<comment type="similarity">
    <text evidence="6">Belongs to the dwarfin/SMAD family.</text>
</comment>
<sequence>MTSMASLFSFTSPAVKRLLGWKQGDEEEKWAEKAVDALVKKLKKKKGAMEELEKALSSPGQPSKCVTIPRSLDGRLQVSHRKGLPHVIYCRVWRWPDLQSHHELKPLDICEFPFGSKQKEVCINPYHYKRVESPVLPPVLVPRHNEFNPQHSLLVQFRNLSHNEPHMPQNATFPDSFHQPNSTPFPLSPNSPYPPSPASSTYPNSPASSGPGSPFQLPADTPPPAYMPPDDQMGQDNSQPMDTSNNMIPQIMPSISSRDVQPVAYEEPKHWCSIVYYELNNRVGEAFHASSTSVLVDGFTDPANNKSRFCLGLLSNVNRNSTIENTRRHIGKGVHLYYVGGEVYAECLSDSSIFVQSRNCNFHHGFHPTTVCKIPSSCSLKIFNNQEFAQLLAQSVNHGFEAVYELTKMCTIRMSFVKGWGAEYHRQDVTSTPCWIEIHLHGPLQWLDKVLTQMGSPLNPISSVS</sequence>
<name>SMAD5_RAT</name>
<accession>Q9R1V3</accession>
<evidence type="ECO:0000250" key="1">
    <source>
        <dbReference type="UniProtKB" id="P97454"/>
    </source>
</evidence>
<evidence type="ECO:0000250" key="2">
    <source>
        <dbReference type="UniProtKB" id="Q99717"/>
    </source>
</evidence>
<evidence type="ECO:0000255" key="3">
    <source>
        <dbReference type="PROSITE-ProRule" id="PRU00438"/>
    </source>
</evidence>
<evidence type="ECO:0000255" key="4">
    <source>
        <dbReference type="PROSITE-ProRule" id="PRU00439"/>
    </source>
</evidence>
<evidence type="ECO:0000256" key="5">
    <source>
        <dbReference type="SAM" id="MobiDB-lite"/>
    </source>
</evidence>
<evidence type="ECO:0000305" key="6"/>
<evidence type="ECO:0007744" key="7">
    <source>
    </source>
</evidence>